<gene>
    <name evidence="1" type="primary">sucC</name>
    <name type="ordered locus">CT_821</name>
</gene>
<name>SUCC_CHLTR</name>
<evidence type="ECO:0000255" key="1">
    <source>
        <dbReference type="HAMAP-Rule" id="MF_00558"/>
    </source>
</evidence>
<sequence length="386" mass="41863">MHLHEYQAKDLLTAYQLPIPPYHVATSVPEVETAIQAEQWKAGVVKAQVHAGGRGKNGGVVIAHSPEDLLAAADKLLHMQFSSNQTAGLSLPINKVLISPLVEIASEYYLAIVIDRKHRCPVIMLSKAGGVDIEEVAEKQPDQLLKMTLPSSGKIYGYQLRRIAKFMEWDQPIADQGNRIIRQLLQCFYEKDASLLEINPLVLTKDGSLVILDAKMTIDDNALYRHPQLADCYDPSQENIRDVLAKQLGLSYIALDGTIGCLVNGAGLAMSTLDILKLYGGSAANFLDVGGSASEKQIQEAISLVLSDKSVRVLFIHIFGGIMDCAVVASGLVSAMQGQKETIPTVIRLEGTNVDKGKDMIINAGIPCEFVTSMSEGAELAVQLSR</sequence>
<protein>
    <recommendedName>
        <fullName evidence="1">Succinate--CoA ligase [ADP-forming] subunit beta</fullName>
        <ecNumber evidence="1">6.2.1.5</ecNumber>
    </recommendedName>
    <alternativeName>
        <fullName evidence="1">Succinyl-CoA synthetase subunit beta</fullName>
        <shortName evidence="1">SCS-beta</shortName>
    </alternativeName>
</protein>
<accession>O84828</accession>
<dbReference type="EC" id="6.2.1.5" evidence="1"/>
<dbReference type="EMBL" id="AE001273">
    <property type="protein sequence ID" value="AAC68418.1"/>
    <property type="molecule type" value="Genomic_DNA"/>
</dbReference>
<dbReference type="PIR" id="G71467">
    <property type="entry name" value="G71467"/>
</dbReference>
<dbReference type="RefSeq" id="NP_220342.1">
    <property type="nucleotide sequence ID" value="NC_000117.1"/>
</dbReference>
<dbReference type="RefSeq" id="WP_009872958.1">
    <property type="nucleotide sequence ID" value="NC_000117.1"/>
</dbReference>
<dbReference type="SMR" id="O84828"/>
<dbReference type="FunCoup" id="O84828">
    <property type="interactions" value="236"/>
</dbReference>
<dbReference type="STRING" id="272561.CT_821"/>
<dbReference type="EnsemblBacteria" id="AAC68418">
    <property type="protein sequence ID" value="AAC68418"/>
    <property type="gene ID" value="CT_821"/>
</dbReference>
<dbReference type="GeneID" id="884621"/>
<dbReference type="KEGG" id="ctr:CT_821"/>
<dbReference type="PATRIC" id="fig|272561.5.peg.907"/>
<dbReference type="HOGENOM" id="CLU_037430_0_2_0"/>
<dbReference type="InParanoid" id="O84828"/>
<dbReference type="OrthoDB" id="9802602at2"/>
<dbReference type="BioCyc" id="MetaCyc:CT_821-MONOMER"/>
<dbReference type="UniPathway" id="UPA00223">
    <property type="reaction ID" value="UER00999"/>
</dbReference>
<dbReference type="Proteomes" id="UP000000431">
    <property type="component" value="Chromosome"/>
</dbReference>
<dbReference type="GO" id="GO:0005829">
    <property type="term" value="C:cytosol"/>
    <property type="evidence" value="ECO:0000318"/>
    <property type="project" value="GO_Central"/>
</dbReference>
<dbReference type="GO" id="GO:0042709">
    <property type="term" value="C:succinate-CoA ligase complex"/>
    <property type="evidence" value="ECO:0000318"/>
    <property type="project" value="GO_Central"/>
</dbReference>
<dbReference type="GO" id="GO:0005524">
    <property type="term" value="F:ATP binding"/>
    <property type="evidence" value="ECO:0007669"/>
    <property type="project" value="UniProtKB-UniRule"/>
</dbReference>
<dbReference type="GO" id="GO:0000287">
    <property type="term" value="F:magnesium ion binding"/>
    <property type="evidence" value="ECO:0007669"/>
    <property type="project" value="UniProtKB-UniRule"/>
</dbReference>
<dbReference type="GO" id="GO:0004775">
    <property type="term" value="F:succinate-CoA ligase (ADP-forming) activity"/>
    <property type="evidence" value="ECO:0000318"/>
    <property type="project" value="GO_Central"/>
</dbReference>
<dbReference type="GO" id="GO:0004776">
    <property type="term" value="F:succinate-CoA ligase (GDP-forming) activity"/>
    <property type="evidence" value="ECO:0007669"/>
    <property type="project" value="RHEA"/>
</dbReference>
<dbReference type="GO" id="GO:0006104">
    <property type="term" value="P:succinyl-CoA metabolic process"/>
    <property type="evidence" value="ECO:0000318"/>
    <property type="project" value="GO_Central"/>
</dbReference>
<dbReference type="GO" id="GO:0006099">
    <property type="term" value="P:tricarboxylic acid cycle"/>
    <property type="evidence" value="ECO:0000318"/>
    <property type="project" value="GO_Central"/>
</dbReference>
<dbReference type="FunFam" id="3.30.470.20:FF:000002">
    <property type="entry name" value="Succinate--CoA ligase [ADP-forming] subunit beta"/>
    <property type="match status" value="1"/>
</dbReference>
<dbReference type="FunFam" id="3.40.50.261:FF:000019">
    <property type="entry name" value="Succinate--CoA ligase [ADP-forming] subunit beta"/>
    <property type="match status" value="1"/>
</dbReference>
<dbReference type="Gene3D" id="3.30.1490.20">
    <property type="entry name" value="ATP-grasp fold, A domain"/>
    <property type="match status" value="1"/>
</dbReference>
<dbReference type="Gene3D" id="3.30.470.20">
    <property type="entry name" value="ATP-grasp fold, B domain"/>
    <property type="match status" value="1"/>
</dbReference>
<dbReference type="Gene3D" id="3.40.50.261">
    <property type="entry name" value="Succinyl-CoA synthetase domains"/>
    <property type="match status" value="1"/>
</dbReference>
<dbReference type="HAMAP" id="MF_00558">
    <property type="entry name" value="Succ_CoA_beta"/>
    <property type="match status" value="1"/>
</dbReference>
<dbReference type="InterPro" id="IPR011761">
    <property type="entry name" value="ATP-grasp"/>
</dbReference>
<dbReference type="InterPro" id="IPR013650">
    <property type="entry name" value="ATP-grasp_succ-CoA_synth-type"/>
</dbReference>
<dbReference type="InterPro" id="IPR013815">
    <property type="entry name" value="ATP_grasp_subdomain_1"/>
</dbReference>
<dbReference type="InterPro" id="IPR017866">
    <property type="entry name" value="Succ-CoA_synthase_bsu_CS"/>
</dbReference>
<dbReference type="InterPro" id="IPR005811">
    <property type="entry name" value="SUCC_ACL_C"/>
</dbReference>
<dbReference type="InterPro" id="IPR005809">
    <property type="entry name" value="Succ_CoA_ligase-like_bsu"/>
</dbReference>
<dbReference type="InterPro" id="IPR016102">
    <property type="entry name" value="Succinyl-CoA_synth-like"/>
</dbReference>
<dbReference type="NCBIfam" id="NF001913">
    <property type="entry name" value="PRK00696.1"/>
    <property type="match status" value="1"/>
</dbReference>
<dbReference type="NCBIfam" id="TIGR01016">
    <property type="entry name" value="sucCoAbeta"/>
    <property type="match status" value="1"/>
</dbReference>
<dbReference type="PANTHER" id="PTHR11815:SF10">
    <property type="entry name" value="SUCCINATE--COA LIGASE [GDP-FORMING] SUBUNIT BETA, MITOCHONDRIAL"/>
    <property type="match status" value="1"/>
</dbReference>
<dbReference type="PANTHER" id="PTHR11815">
    <property type="entry name" value="SUCCINYL-COA SYNTHETASE BETA CHAIN"/>
    <property type="match status" value="1"/>
</dbReference>
<dbReference type="Pfam" id="PF08442">
    <property type="entry name" value="ATP-grasp_2"/>
    <property type="match status" value="1"/>
</dbReference>
<dbReference type="Pfam" id="PF00549">
    <property type="entry name" value="Ligase_CoA"/>
    <property type="match status" value="1"/>
</dbReference>
<dbReference type="PIRSF" id="PIRSF001554">
    <property type="entry name" value="SucCS_beta"/>
    <property type="match status" value="1"/>
</dbReference>
<dbReference type="SUPFAM" id="SSF56059">
    <property type="entry name" value="Glutathione synthetase ATP-binding domain-like"/>
    <property type="match status" value="1"/>
</dbReference>
<dbReference type="SUPFAM" id="SSF52210">
    <property type="entry name" value="Succinyl-CoA synthetase domains"/>
    <property type="match status" value="1"/>
</dbReference>
<dbReference type="PROSITE" id="PS50975">
    <property type="entry name" value="ATP_GRASP"/>
    <property type="match status" value="1"/>
</dbReference>
<dbReference type="PROSITE" id="PS01217">
    <property type="entry name" value="SUCCINYL_COA_LIG_3"/>
    <property type="match status" value="1"/>
</dbReference>
<proteinExistence type="inferred from homology"/>
<reference key="1">
    <citation type="journal article" date="1998" name="Science">
        <title>Genome sequence of an obligate intracellular pathogen of humans: Chlamydia trachomatis.</title>
        <authorList>
            <person name="Stephens R.S."/>
            <person name="Kalman S."/>
            <person name="Lammel C.J."/>
            <person name="Fan J."/>
            <person name="Marathe R."/>
            <person name="Aravind L."/>
            <person name="Mitchell W.P."/>
            <person name="Olinger L."/>
            <person name="Tatusov R.L."/>
            <person name="Zhao Q."/>
            <person name="Koonin E.V."/>
            <person name="Davis R.W."/>
        </authorList>
    </citation>
    <scope>NUCLEOTIDE SEQUENCE [LARGE SCALE GENOMIC DNA]</scope>
    <source>
        <strain>ATCC VR-885 / DSM 19411 / UW-3/Cx</strain>
    </source>
</reference>
<organism>
    <name type="scientific">Chlamydia trachomatis serovar D (strain ATCC VR-885 / DSM 19411 / UW-3/Cx)</name>
    <dbReference type="NCBI Taxonomy" id="272561"/>
    <lineage>
        <taxon>Bacteria</taxon>
        <taxon>Pseudomonadati</taxon>
        <taxon>Chlamydiota</taxon>
        <taxon>Chlamydiia</taxon>
        <taxon>Chlamydiales</taxon>
        <taxon>Chlamydiaceae</taxon>
        <taxon>Chlamydia/Chlamydophila group</taxon>
        <taxon>Chlamydia</taxon>
    </lineage>
</organism>
<feature type="chain" id="PRO_0000102828" description="Succinate--CoA ligase [ADP-forming] subunit beta">
    <location>
        <begin position="1"/>
        <end position="386"/>
    </location>
</feature>
<feature type="domain" description="ATP-grasp" evidence="1">
    <location>
        <begin position="9"/>
        <end position="244"/>
    </location>
</feature>
<feature type="binding site" evidence="1">
    <location>
        <position position="46"/>
    </location>
    <ligand>
        <name>ATP</name>
        <dbReference type="ChEBI" id="CHEBI:30616"/>
    </ligand>
</feature>
<feature type="binding site" evidence="1">
    <location>
        <begin position="53"/>
        <end position="55"/>
    </location>
    <ligand>
        <name>ATP</name>
        <dbReference type="ChEBI" id="CHEBI:30616"/>
    </ligand>
</feature>
<feature type="binding site" evidence="1">
    <location>
        <position position="102"/>
    </location>
    <ligand>
        <name>ATP</name>
        <dbReference type="ChEBI" id="CHEBI:30616"/>
    </ligand>
</feature>
<feature type="binding site" evidence="1">
    <location>
        <position position="107"/>
    </location>
    <ligand>
        <name>ATP</name>
        <dbReference type="ChEBI" id="CHEBI:30616"/>
    </ligand>
</feature>
<feature type="binding site" evidence="1">
    <location>
        <position position="199"/>
    </location>
    <ligand>
        <name>Mg(2+)</name>
        <dbReference type="ChEBI" id="CHEBI:18420"/>
    </ligand>
</feature>
<feature type="binding site" evidence="1">
    <location>
        <position position="213"/>
    </location>
    <ligand>
        <name>Mg(2+)</name>
        <dbReference type="ChEBI" id="CHEBI:18420"/>
    </ligand>
</feature>
<feature type="binding site" evidence="1">
    <location>
        <position position="264"/>
    </location>
    <ligand>
        <name>substrate</name>
        <note>ligand shared with subunit alpha</note>
    </ligand>
</feature>
<feature type="binding site" evidence="1">
    <location>
        <begin position="321"/>
        <end position="323"/>
    </location>
    <ligand>
        <name>substrate</name>
        <note>ligand shared with subunit alpha</note>
    </ligand>
</feature>
<comment type="function">
    <text evidence="1">Succinyl-CoA synthetase functions in the citric acid cycle (TCA), coupling the hydrolysis of succinyl-CoA to the synthesis of either ATP or GTP and thus represents the only step of substrate-level phosphorylation in the TCA. The beta subunit provides nucleotide specificity of the enzyme and binds the substrate succinate, while the binding sites for coenzyme A and phosphate are found in the alpha subunit.</text>
</comment>
<comment type="catalytic activity">
    <reaction evidence="1">
        <text>succinate + ATP + CoA = succinyl-CoA + ADP + phosphate</text>
        <dbReference type="Rhea" id="RHEA:17661"/>
        <dbReference type="ChEBI" id="CHEBI:30031"/>
        <dbReference type="ChEBI" id="CHEBI:30616"/>
        <dbReference type="ChEBI" id="CHEBI:43474"/>
        <dbReference type="ChEBI" id="CHEBI:57287"/>
        <dbReference type="ChEBI" id="CHEBI:57292"/>
        <dbReference type="ChEBI" id="CHEBI:456216"/>
        <dbReference type="EC" id="6.2.1.5"/>
    </reaction>
    <physiologicalReaction direction="right-to-left" evidence="1">
        <dbReference type="Rhea" id="RHEA:17663"/>
    </physiologicalReaction>
</comment>
<comment type="catalytic activity">
    <reaction evidence="1">
        <text>GTP + succinate + CoA = succinyl-CoA + GDP + phosphate</text>
        <dbReference type="Rhea" id="RHEA:22120"/>
        <dbReference type="ChEBI" id="CHEBI:30031"/>
        <dbReference type="ChEBI" id="CHEBI:37565"/>
        <dbReference type="ChEBI" id="CHEBI:43474"/>
        <dbReference type="ChEBI" id="CHEBI:57287"/>
        <dbReference type="ChEBI" id="CHEBI:57292"/>
        <dbReference type="ChEBI" id="CHEBI:58189"/>
    </reaction>
    <physiologicalReaction direction="right-to-left" evidence="1">
        <dbReference type="Rhea" id="RHEA:22122"/>
    </physiologicalReaction>
</comment>
<comment type="cofactor">
    <cofactor evidence="1">
        <name>Mg(2+)</name>
        <dbReference type="ChEBI" id="CHEBI:18420"/>
    </cofactor>
    <text evidence="1">Binds 1 Mg(2+) ion per subunit.</text>
</comment>
<comment type="pathway">
    <text evidence="1">Carbohydrate metabolism; tricarboxylic acid cycle; succinate from succinyl-CoA (ligase route): step 1/1.</text>
</comment>
<comment type="subunit">
    <text evidence="1">Heterotetramer of two alpha and two beta subunits.</text>
</comment>
<comment type="similarity">
    <text evidence="1">Belongs to the succinate/malate CoA ligase beta subunit family.</text>
</comment>
<keyword id="KW-0067">ATP-binding</keyword>
<keyword id="KW-0436">Ligase</keyword>
<keyword id="KW-0460">Magnesium</keyword>
<keyword id="KW-0479">Metal-binding</keyword>
<keyword id="KW-0547">Nucleotide-binding</keyword>
<keyword id="KW-1185">Reference proteome</keyword>
<keyword id="KW-0816">Tricarboxylic acid cycle</keyword>